<gene>
    <name evidence="1" type="primary">PIM1</name>
    <name type="ORF">CD36_29680</name>
</gene>
<sequence>MIKASKCNKARALFLVRTSIPRTFIRNATSAIPTTVKLKDLSSLPPLTKSLPTNLPFLMPDTLHNLLRFDSKKEKQPSTDKSNDKDKPSRKEKGKDKEKENEERKDINEDEKYDIKEETDSKPTIDPNNPVSSKSSISSSSGGANNNNNNDDSDGRDDDGSPKDKEFLSPSDAGLHPPFLAIAMKDRPFLPGATRHLHVTDPEVIKCVNHMINSNIKSPYFVLFHVRDTNSEDAALDVIKDRDFVHEVGTLCQIIKTTGSEILVYPHYRVKLVDISTPNSRSERIEMEQDNSQTSYLKKFEVSYAVTQQLKDEPYDEQSITINAWTRRIKELYEKLAPKYEQPENKEEIMNNPSMLADFIASKVHAKPEQIQQILESSNVETKLELSLQLLQVEADADEMRQTALKNIRERTEKAYAQSLIKEYTKELLKAAGIGENSKVHKFDERIKHLKMPEEAMKAYKTEKERLGTQSDMEQNVVERYLDWLTQIPFGVYTKDSFNVKKAREILDRDHYGLKDVKDRILEFISVGKISGNVDGRILCLAGPPGTGKTSIAKSIAEALNRKYTRIAVGGVQDVHDVKGHRRTYVASIPGRIVTALTQAKTSNPLMLIDEIDKLDTTSHGGAARAFLEILDPEQNNSFVDNFIEVKVDLSKVLFVCTANYLGSIPAPLRDRMEIIEVNGYTKNDKIEITKRHLIPAAAKKVGLEEGRVVIPDETILRLIDKYCRESGLRHIKSLINRIFSKASRKIVEELEDTDADPHSREIVEESLVAKENESVISDKAKKDAGSSSIESNDSNTEAKVSTTTENEKKQEQKQKQDEEIKKLDLPADLKIEVKPETLKDFVGPEIYIKDRLYETLNPGVATGLAYNTSGDGDALYIESILTDSISSDLGNAGLHVTGSLKEVMKESASIAYSFAKQFMVRQFPDNRFFEAAHIHVHCPGGAIPKDGPSAGIAFTSSLVSLALNKSLPNDTAMTGEITLTGKVLAIGGLREKSLGAKRAGYTKIIFPKDCEYQLDEIPDEVKEGLTYIPVEWYSEVFEHLFKGISKEEGNSVWKEEFAKLEEKKKSKKTHTV</sequence>
<dbReference type="EC" id="3.4.21.53" evidence="1"/>
<dbReference type="EMBL" id="FM992695">
    <property type="protein sequence ID" value="CAX39997.1"/>
    <property type="molecule type" value="Genomic_DNA"/>
</dbReference>
<dbReference type="RefSeq" id="XP_002421996.1">
    <property type="nucleotide sequence ID" value="XM_002421951.1"/>
</dbReference>
<dbReference type="SMR" id="B9WLN5"/>
<dbReference type="MEROPS" id="S16.010"/>
<dbReference type="GeneID" id="8050112"/>
<dbReference type="KEGG" id="cdu:CD36_29680"/>
<dbReference type="CGD" id="CAL0000159169">
    <property type="gene designation" value="Cd36_29680"/>
</dbReference>
<dbReference type="VEuPathDB" id="FungiDB:CD36_29680"/>
<dbReference type="eggNOG" id="KOG2004">
    <property type="taxonomic scope" value="Eukaryota"/>
</dbReference>
<dbReference type="HOGENOM" id="CLU_004109_1_0_1"/>
<dbReference type="OrthoDB" id="2411602at2759"/>
<dbReference type="Proteomes" id="UP000002605">
    <property type="component" value="Chromosome R"/>
</dbReference>
<dbReference type="GO" id="GO:0005759">
    <property type="term" value="C:mitochondrial matrix"/>
    <property type="evidence" value="ECO:0007669"/>
    <property type="project" value="UniProtKB-SubCell"/>
</dbReference>
<dbReference type="GO" id="GO:0005524">
    <property type="term" value="F:ATP binding"/>
    <property type="evidence" value="ECO:0007669"/>
    <property type="project" value="UniProtKB-UniRule"/>
</dbReference>
<dbReference type="GO" id="GO:0016887">
    <property type="term" value="F:ATP hydrolysis activity"/>
    <property type="evidence" value="ECO:0007669"/>
    <property type="project" value="UniProtKB-UniRule"/>
</dbReference>
<dbReference type="GO" id="GO:0004176">
    <property type="term" value="F:ATP-dependent peptidase activity"/>
    <property type="evidence" value="ECO:0007669"/>
    <property type="project" value="UniProtKB-UniRule"/>
</dbReference>
<dbReference type="GO" id="GO:0043565">
    <property type="term" value="F:sequence-specific DNA binding"/>
    <property type="evidence" value="ECO:0007669"/>
    <property type="project" value="UniProtKB-UniRule"/>
</dbReference>
<dbReference type="GO" id="GO:0004252">
    <property type="term" value="F:serine-type endopeptidase activity"/>
    <property type="evidence" value="ECO:0007669"/>
    <property type="project" value="UniProtKB-UniRule"/>
</dbReference>
<dbReference type="GO" id="GO:0003697">
    <property type="term" value="F:single-stranded DNA binding"/>
    <property type="evidence" value="ECO:0007669"/>
    <property type="project" value="TreeGrafter"/>
</dbReference>
<dbReference type="GO" id="GO:0034599">
    <property type="term" value="P:cellular response to oxidative stress"/>
    <property type="evidence" value="ECO:0007669"/>
    <property type="project" value="UniProtKB-UniRule"/>
</dbReference>
<dbReference type="GO" id="GO:0051131">
    <property type="term" value="P:chaperone-mediated protein complex assembly"/>
    <property type="evidence" value="ECO:0007669"/>
    <property type="project" value="UniProtKB-UniRule"/>
</dbReference>
<dbReference type="GO" id="GO:0007005">
    <property type="term" value="P:mitochondrion organization"/>
    <property type="evidence" value="ECO:0007669"/>
    <property type="project" value="TreeGrafter"/>
</dbReference>
<dbReference type="GO" id="GO:0070407">
    <property type="term" value="P:oxidation-dependent protein catabolic process"/>
    <property type="evidence" value="ECO:0007669"/>
    <property type="project" value="UniProtKB-UniRule"/>
</dbReference>
<dbReference type="GO" id="GO:0006515">
    <property type="term" value="P:protein quality control for misfolded or incompletely synthesized proteins"/>
    <property type="evidence" value="ECO:0007669"/>
    <property type="project" value="UniProtKB-UniRule"/>
</dbReference>
<dbReference type="CDD" id="cd19500">
    <property type="entry name" value="RecA-like_Lon"/>
    <property type="match status" value="1"/>
</dbReference>
<dbReference type="FunFam" id="3.40.50.300:FF:003183">
    <property type="entry name" value="Lon protease homolog, mitochondrial"/>
    <property type="match status" value="1"/>
</dbReference>
<dbReference type="Gene3D" id="1.10.8.60">
    <property type="match status" value="1"/>
</dbReference>
<dbReference type="Gene3D" id="1.20.5.5270">
    <property type="match status" value="1"/>
</dbReference>
<dbReference type="Gene3D" id="1.20.58.1480">
    <property type="match status" value="1"/>
</dbReference>
<dbReference type="Gene3D" id="3.30.230.10">
    <property type="match status" value="1"/>
</dbReference>
<dbReference type="Gene3D" id="2.30.130.40">
    <property type="entry name" value="LON domain-like"/>
    <property type="match status" value="1"/>
</dbReference>
<dbReference type="Gene3D" id="3.40.50.300">
    <property type="entry name" value="P-loop containing nucleotide triphosphate hydrolases"/>
    <property type="match status" value="1"/>
</dbReference>
<dbReference type="HAMAP" id="MF_03120">
    <property type="entry name" value="lonm_euk"/>
    <property type="match status" value="1"/>
</dbReference>
<dbReference type="InterPro" id="IPR003593">
    <property type="entry name" value="AAA+_ATPase"/>
</dbReference>
<dbReference type="InterPro" id="IPR003959">
    <property type="entry name" value="ATPase_AAA_core"/>
</dbReference>
<dbReference type="InterPro" id="IPR004815">
    <property type="entry name" value="Lon_bac/euk-typ"/>
</dbReference>
<dbReference type="InterPro" id="IPR054594">
    <property type="entry name" value="Lon_lid"/>
</dbReference>
<dbReference type="InterPro" id="IPR008269">
    <property type="entry name" value="Lon_proteolytic"/>
</dbReference>
<dbReference type="InterPro" id="IPR027065">
    <property type="entry name" value="Lon_Prtase"/>
</dbReference>
<dbReference type="InterPro" id="IPR003111">
    <property type="entry name" value="Lon_prtase_N"/>
</dbReference>
<dbReference type="InterPro" id="IPR046336">
    <property type="entry name" value="Lon_prtase_N_sf"/>
</dbReference>
<dbReference type="InterPro" id="IPR027503">
    <property type="entry name" value="Lonm_euk"/>
</dbReference>
<dbReference type="InterPro" id="IPR027417">
    <property type="entry name" value="P-loop_NTPase"/>
</dbReference>
<dbReference type="InterPro" id="IPR015947">
    <property type="entry name" value="PUA-like_sf"/>
</dbReference>
<dbReference type="InterPro" id="IPR020568">
    <property type="entry name" value="Ribosomal_Su5_D2-typ_SF"/>
</dbReference>
<dbReference type="InterPro" id="IPR014721">
    <property type="entry name" value="Ribsml_uS5_D2-typ_fold_subgr"/>
</dbReference>
<dbReference type="NCBIfam" id="TIGR00763">
    <property type="entry name" value="lon"/>
    <property type="match status" value="1"/>
</dbReference>
<dbReference type="PANTHER" id="PTHR43718">
    <property type="entry name" value="LON PROTEASE"/>
    <property type="match status" value="1"/>
</dbReference>
<dbReference type="PANTHER" id="PTHR43718:SF2">
    <property type="entry name" value="LON PROTEASE HOMOLOG, MITOCHONDRIAL"/>
    <property type="match status" value="1"/>
</dbReference>
<dbReference type="Pfam" id="PF00004">
    <property type="entry name" value="AAA"/>
    <property type="match status" value="1"/>
</dbReference>
<dbReference type="Pfam" id="PF05362">
    <property type="entry name" value="Lon_C"/>
    <property type="match status" value="1"/>
</dbReference>
<dbReference type="Pfam" id="PF22667">
    <property type="entry name" value="Lon_lid"/>
    <property type="match status" value="1"/>
</dbReference>
<dbReference type="Pfam" id="PF02190">
    <property type="entry name" value="LON_substr_bdg"/>
    <property type="match status" value="1"/>
</dbReference>
<dbReference type="PRINTS" id="PR00830">
    <property type="entry name" value="ENDOLAPTASE"/>
</dbReference>
<dbReference type="SMART" id="SM00382">
    <property type="entry name" value="AAA"/>
    <property type="match status" value="1"/>
</dbReference>
<dbReference type="SMART" id="SM00464">
    <property type="entry name" value="LON"/>
    <property type="match status" value="1"/>
</dbReference>
<dbReference type="SUPFAM" id="SSF52540">
    <property type="entry name" value="P-loop containing nucleoside triphosphate hydrolases"/>
    <property type="match status" value="1"/>
</dbReference>
<dbReference type="SUPFAM" id="SSF88697">
    <property type="entry name" value="PUA domain-like"/>
    <property type="match status" value="1"/>
</dbReference>
<dbReference type="SUPFAM" id="SSF54211">
    <property type="entry name" value="Ribosomal protein S5 domain 2-like"/>
    <property type="match status" value="1"/>
</dbReference>
<dbReference type="PROSITE" id="PS51787">
    <property type="entry name" value="LON_N"/>
    <property type="match status" value="1"/>
</dbReference>
<dbReference type="PROSITE" id="PS51786">
    <property type="entry name" value="LON_PROTEOLYTIC"/>
    <property type="match status" value="1"/>
</dbReference>
<organism>
    <name type="scientific">Candida dubliniensis (strain CD36 / ATCC MYA-646 / CBS 7987 / NCPF 3949 / NRRL Y-17841)</name>
    <name type="common">Yeast</name>
    <dbReference type="NCBI Taxonomy" id="573826"/>
    <lineage>
        <taxon>Eukaryota</taxon>
        <taxon>Fungi</taxon>
        <taxon>Dikarya</taxon>
        <taxon>Ascomycota</taxon>
        <taxon>Saccharomycotina</taxon>
        <taxon>Pichiomycetes</taxon>
        <taxon>Debaryomycetaceae</taxon>
        <taxon>Candida/Lodderomyces clade</taxon>
        <taxon>Candida</taxon>
    </lineage>
</organism>
<comment type="function">
    <text evidence="1">ATP-dependent serine protease that mediates the selective degradation of misfolded, unassembled or oxidatively damaged polypeptides as well as certain short-lived regulatory proteins in the mitochondrial matrix. May also have a chaperone function in the assembly of inner membrane protein complexes. Participates in the regulation of mitochondrial gene expression and in the maintenance of the integrity of the mitochondrial genome. Binds to mitochondrial DNA in a site-specific manner.</text>
</comment>
<comment type="catalytic activity">
    <reaction evidence="1">
        <text>Hydrolysis of proteins in presence of ATP.</text>
        <dbReference type="EC" id="3.4.21.53"/>
    </reaction>
</comment>
<comment type="subunit">
    <text evidence="1">Homohexamer or homoheptamer. Organized in a ring with a central cavity.</text>
</comment>
<comment type="subcellular location">
    <subcellularLocation>
        <location evidence="1">Mitochondrion matrix</location>
    </subcellularLocation>
</comment>
<comment type="similarity">
    <text evidence="1">Belongs to the peptidase S16 family.</text>
</comment>
<evidence type="ECO:0000255" key="1">
    <source>
        <dbReference type="HAMAP-Rule" id="MF_03120"/>
    </source>
</evidence>
<evidence type="ECO:0000255" key="2">
    <source>
        <dbReference type="PROSITE-ProRule" id="PRU01122"/>
    </source>
</evidence>
<evidence type="ECO:0000255" key="3">
    <source>
        <dbReference type="PROSITE-ProRule" id="PRU01123"/>
    </source>
</evidence>
<evidence type="ECO:0000256" key="4">
    <source>
        <dbReference type="SAM" id="MobiDB-lite"/>
    </source>
</evidence>
<name>LONM_CANDC</name>
<proteinExistence type="inferred from homology"/>
<reference key="1">
    <citation type="journal article" date="2009" name="Genome Res.">
        <title>Comparative genomics of the fungal pathogens Candida dubliniensis and Candida albicans.</title>
        <authorList>
            <person name="Jackson A.P."/>
            <person name="Gamble J.A."/>
            <person name="Yeomans T."/>
            <person name="Moran G.P."/>
            <person name="Saunders D."/>
            <person name="Harris D."/>
            <person name="Aslett M."/>
            <person name="Barrell J.F."/>
            <person name="Butler G."/>
            <person name="Citiulo F."/>
            <person name="Coleman D.C."/>
            <person name="de Groot P.W.J."/>
            <person name="Goodwin T.J."/>
            <person name="Quail M.A."/>
            <person name="McQuillan J."/>
            <person name="Munro C.A."/>
            <person name="Pain A."/>
            <person name="Poulter R.T."/>
            <person name="Rajandream M.A."/>
            <person name="Renauld H."/>
            <person name="Spiering M.J."/>
            <person name="Tivey A."/>
            <person name="Gow N.A.R."/>
            <person name="Barrell B."/>
            <person name="Sullivan D.J."/>
            <person name="Berriman M."/>
        </authorList>
    </citation>
    <scope>NUCLEOTIDE SEQUENCE [LARGE SCALE GENOMIC DNA]</scope>
    <source>
        <strain>CD36 / ATCC MYA-646 / CBS 7987 / NCPF 3949 / NRRL Y-17841</strain>
    </source>
</reference>
<accession>B9WLN5</accession>
<keyword id="KW-0067">ATP-binding</keyword>
<keyword id="KW-0238">DNA-binding</keyword>
<keyword id="KW-0378">Hydrolase</keyword>
<keyword id="KW-0496">Mitochondrion</keyword>
<keyword id="KW-0547">Nucleotide-binding</keyword>
<keyword id="KW-0645">Protease</keyword>
<keyword id="KW-0720">Serine protease</keyword>
<keyword id="KW-0809">Transit peptide</keyword>
<protein>
    <recommendedName>
        <fullName evidence="1">Lon protease homolog, mitochondrial</fullName>
        <ecNumber evidence="1">3.4.21.53</ecNumber>
    </recommendedName>
</protein>
<feature type="transit peptide" description="Mitochondrion" evidence="1">
    <location>
        <begin position="1"/>
        <end position="27"/>
    </location>
</feature>
<feature type="chain" id="PRO_0000395775" description="Lon protease homolog, mitochondrial">
    <location>
        <begin position="28"/>
        <end position="1073"/>
    </location>
</feature>
<feature type="domain" description="Lon N-terminal" evidence="3">
    <location>
        <begin position="177"/>
        <end position="395"/>
    </location>
</feature>
<feature type="domain" description="Lon proteolytic" evidence="2">
    <location>
        <begin position="856"/>
        <end position="1044"/>
    </location>
</feature>
<feature type="region of interest" description="Disordered" evidence="4">
    <location>
        <begin position="69"/>
        <end position="173"/>
    </location>
</feature>
<feature type="region of interest" description="Disordered" evidence="4">
    <location>
        <begin position="775"/>
        <end position="821"/>
    </location>
</feature>
<feature type="compositionally biased region" description="Basic and acidic residues" evidence="4">
    <location>
        <begin position="69"/>
        <end position="107"/>
    </location>
</feature>
<feature type="compositionally biased region" description="Basic and acidic residues" evidence="4">
    <location>
        <begin position="113"/>
        <end position="123"/>
    </location>
</feature>
<feature type="compositionally biased region" description="Low complexity" evidence="4">
    <location>
        <begin position="132"/>
        <end position="150"/>
    </location>
</feature>
<feature type="compositionally biased region" description="Basic and acidic residues" evidence="4">
    <location>
        <begin position="158"/>
        <end position="167"/>
    </location>
</feature>
<feature type="compositionally biased region" description="Basic and acidic residues" evidence="4">
    <location>
        <begin position="775"/>
        <end position="785"/>
    </location>
</feature>
<feature type="compositionally biased region" description="Polar residues" evidence="4">
    <location>
        <begin position="790"/>
        <end position="805"/>
    </location>
</feature>
<feature type="compositionally biased region" description="Basic and acidic residues" evidence="4">
    <location>
        <begin position="806"/>
        <end position="821"/>
    </location>
</feature>
<feature type="active site" evidence="1">
    <location>
        <position position="950"/>
    </location>
</feature>
<feature type="active site" evidence="1">
    <location>
        <position position="993"/>
    </location>
</feature>
<feature type="binding site" evidence="1">
    <location>
        <begin position="543"/>
        <end position="550"/>
    </location>
    <ligand>
        <name>ATP</name>
        <dbReference type="ChEBI" id="CHEBI:30616"/>
    </ligand>
</feature>